<evidence type="ECO:0000256" key="1">
    <source>
        <dbReference type="SAM" id="MobiDB-lite"/>
    </source>
</evidence>
<evidence type="ECO:0000305" key="2"/>
<keyword id="KW-1185">Reference proteome</keyword>
<sequence>MKRTKSIRHASFRKNWSARHLTPVALAVATVFMLAGCEKSDETVSLYQNADDCSAANPGKSAECTTAYNNALKEAERTAPKYATREDCVAEFGEGQCQQAPAQAGMAPENQAQAQQSSGSFWMPLMAGYMMGRLMGGGAGFAQQPLFSSKNPASPAYGKYTDATGKNYGAAQPGRTMTVPKTAMAPKPATTTTVTRGGFGESVAKQSTMQRSATGTSSRSMGG</sequence>
<gene>
    <name type="primary">ygiB</name>
    <name type="ordered locus">b3037</name>
    <name type="ordered locus">JW5927</name>
</gene>
<reference key="1">
    <citation type="journal article" date="1992" name="Biochim. Biophys. Acta">
        <title>Nucleotide sequence of a region duplicated in Escherichia coli toc mutants.</title>
        <authorList>
            <person name="Yang T.-P."/>
            <person name="Depew R.E."/>
        </authorList>
    </citation>
    <scope>NUCLEOTIDE SEQUENCE [GENOMIC DNA]</scope>
</reference>
<reference key="2">
    <citation type="journal article" date="1997" name="Science">
        <title>The complete genome sequence of Escherichia coli K-12.</title>
        <authorList>
            <person name="Blattner F.R."/>
            <person name="Plunkett G. III"/>
            <person name="Bloch C.A."/>
            <person name="Perna N.T."/>
            <person name="Burland V."/>
            <person name="Riley M."/>
            <person name="Collado-Vides J."/>
            <person name="Glasner J.D."/>
            <person name="Rode C.K."/>
            <person name="Mayhew G.F."/>
            <person name="Gregor J."/>
            <person name="Davis N.W."/>
            <person name="Kirkpatrick H.A."/>
            <person name="Goeden M.A."/>
            <person name="Rose D.J."/>
            <person name="Mau B."/>
            <person name="Shao Y."/>
        </authorList>
    </citation>
    <scope>NUCLEOTIDE SEQUENCE [LARGE SCALE GENOMIC DNA]</scope>
    <source>
        <strain>K12 / MG1655 / ATCC 47076</strain>
    </source>
</reference>
<reference key="3">
    <citation type="journal article" date="2006" name="Mol. Syst. Biol.">
        <title>Highly accurate genome sequences of Escherichia coli K-12 strains MG1655 and W3110.</title>
        <authorList>
            <person name="Hayashi K."/>
            <person name="Morooka N."/>
            <person name="Yamamoto Y."/>
            <person name="Fujita K."/>
            <person name="Isono K."/>
            <person name="Choi S."/>
            <person name="Ohtsubo E."/>
            <person name="Baba T."/>
            <person name="Wanner B.L."/>
            <person name="Mori H."/>
            <person name="Horiuchi T."/>
        </authorList>
    </citation>
    <scope>NUCLEOTIDE SEQUENCE [LARGE SCALE GENOMIC DNA]</scope>
    <source>
        <strain>K12 / W3110 / ATCC 27325 / DSM 5911</strain>
    </source>
</reference>
<proteinExistence type="inferred from homology"/>
<organism>
    <name type="scientific">Escherichia coli (strain K12)</name>
    <dbReference type="NCBI Taxonomy" id="83333"/>
    <lineage>
        <taxon>Bacteria</taxon>
        <taxon>Pseudomonadati</taxon>
        <taxon>Pseudomonadota</taxon>
        <taxon>Gammaproteobacteria</taxon>
        <taxon>Enterobacterales</taxon>
        <taxon>Enterobacteriaceae</taxon>
        <taxon>Escherichia</taxon>
    </lineage>
</organism>
<feature type="chain" id="PRO_0000169398" description="UPF0441 protein YgiB">
    <location>
        <begin position="1"/>
        <end position="223"/>
    </location>
</feature>
<feature type="region of interest" description="Disordered" evidence="1">
    <location>
        <begin position="178"/>
        <end position="223"/>
    </location>
</feature>
<feature type="compositionally biased region" description="Low complexity" evidence="1">
    <location>
        <begin position="178"/>
        <end position="195"/>
    </location>
</feature>
<feature type="compositionally biased region" description="Polar residues" evidence="1">
    <location>
        <begin position="204"/>
        <end position="223"/>
    </location>
</feature>
<name>YGIB_ECOLI</name>
<dbReference type="EMBL" id="M77129">
    <property type="protein sequence ID" value="AAA71875.1"/>
    <property type="status" value="ALT_INIT"/>
    <property type="molecule type" value="Genomic_DNA"/>
</dbReference>
<dbReference type="EMBL" id="U28377">
    <property type="protein sequence ID" value="AAA69205.1"/>
    <property type="status" value="ALT_INIT"/>
    <property type="molecule type" value="Genomic_DNA"/>
</dbReference>
<dbReference type="EMBL" id="U00096">
    <property type="protein sequence ID" value="AAC76073.3"/>
    <property type="molecule type" value="Genomic_DNA"/>
</dbReference>
<dbReference type="EMBL" id="AP009048">
    <property type="protein sequence ID" value="BAE77093.1"/>
    <property type="status" value="ALT_INIT"/>
    <property type="molecule type" value="Genomic_DNA"/>
</dbReference>
<dbReference type="PIR" id="S22360">
    <property type="entry name" value="S22360"/>
</dbReference>
<dbReference type="RefSeq" id="NP_417509.3">
    <property type="nucleotide sequence ID" value="NC_000913.3"/>
</dbReference>
<dbReference type="RefSeq" id="WP_000831543.1">
    <property type="nucleotide sequence ID" value="NZ_STEB01000001.1"/>
</dbReference>
<dbReference type="SMR" id="P0ADT2"/>
<dbReference type="BioGRID" id="4261746">
    <property type="interactions" value="21"/>
</dbReference>
<dbReference type="FunCoup" id="P0ADT2">
    <property type="interactions" value="28"/>
</dbReference>
<dbReference type="STRING" id="511145.b3037"/>
<dbReference type="jPOST" id="P0ADT2"/>
<dbReference type="PaxDb" id="511145-b3037"/>
<dbReference type="EnsemblBacteria" id="AAC76073">
    <property type="protein sequence ID" value="AAC76073"/>
    <property type="gene ID" value="b3037"/>
</dbReference>
<dbReference type="GeneID" id="945086"/>
<dbReference type="KEGG" id="ecj:JW5927"/>
<dbReference type="KEGG" id="eco:b3037"/>
<dbReference type="KEGG" id="ecoc:C3026_16585"/>
<dbReference type="PATRIC" id="fig|511145.12.peg.3129"/>
<dbReference type="EchoBASE" id="EB1152"/>
<dbReference type="eggNOG" id="COG5463">
    <property type="taxonomic scope" value="Bacteria"/>
</dbReference>
<dbReference type="HOGENOM" id="CLU_095624_0_1_6"/>
<dbReference type="InParanoid" id="P0ADT2"/>
<dbReference type="OMA" id="NRYYSQP"/>
<dbReference type="OrthoDB" id="5903948at2"/>
<dbReference type="PhylomeDB" id="P0ADT2"/>
<dbReference type="BioCyc" id="EcoCyc:EG11164-MONOMER"/>
<dbReference type="PRO" id="PR:P0ADT2"/>
<dbReference type="Proteomes" id="UP000000625">
    <property type="component" value="Chromosome"/>
</dbReference>
<dbReference type="GO" id="GO:0009279">
    <property type="term" value="C:cell outer membrane"/>
    <property type="evidence" value="ECO:0000314"/>
    <property type="project" value="EcoCyc"/>
</dbReference>
<dbReference type="GO" id="GO:0044010">
    <property type="term" value="P:single-species biofilm formation"/>
    <property type="evidence" value="ECO:0000315"/>
    <property type="project" value="EcoCyc"/>
</dbReference>
<dbReference type="HAMAP" id="MF_01188">
    <property type="entry name" value="UPF0441"/>
    <property type="match status" value="1"/>
</dbReference>
<dbReference type="InterPro" id="IPR009576">
    <property type="entry name" value="Biofilm_formation_YgiB"/>
</dbReference>
<dbReference type="NCBIfam" id="NF008655">
    <property type="entry name" value="PRK11653.1"/>
    <property type="match status" value="1"/>
</dbReference>
<dbReference type="Pfam" id="PF06693">
    <property type="entry name" value="DUF1190"/>
    <property type="match status" value="1"/>
</dbReference>
<protein>
    <recommendedName>
        <fullName>UPF0441 protein YgiB</fullName>
    </recommendedName>
</protein>
<accession>P0ADT2</accession>
<accession>P24195</accession>
<accession>Q2M9G3</accession>
<comment type="similarity">
    <text evidence="2">Belongs to the UPF0441 family.</text>
</comment>
<comment type="sequence caution" evidence="2">
    <conflict type="erroneous initiation">
        <sequence resource="EMBL-CDS" id="AAA69205"/>
    </conflict>
</comment>
<comment type="sequence caution" evidence="2">
    <conflict type="erroneous initiation">
        <sequence resource="EMBL-CDS" id="AAA71875"/>
    </conflict>
</comment>
<comment type="sequence caution" evidence="2">
    <conflict type="erroneous initiation">
        <sequence resource="EMBL-CDS" id="BAE77093"/>
    </conflict>
</comment>